<dbReference type="EC" id="5.6.1.7" evidence="1"/>
<dbReference type="EMBL" id="BA000028">
    <property type="protein sequence ID" value="BAC12612.1"/>
    <property type="molecule type" value="Genomic_DNA"/>
</dbReference>
<dbReference type="RefSeq" id="WP_011065062.1">
    <property type="nucleotide sequence ID" value="NC_004193.1"/>
</dbReference>
<dbReference type="SMR" id="Q8CXL3"/>
<dbReference type="STRING" id="221109.gene:10732877"/>
<dbReference type="KEGG" id="oih:OB0656"/>
<dbReference type="eggNOG" id="COG0459">
    <property type="taxonomic scope" value="Bacteria"/>
</dbReference>
<dbReference type="HOGENOM" id="CLU_016503_3_0_9"/>
<dbReference type="OrthoDB" id="9766614at2"/>
<dbReference type="PhylomeDB" id="Q8CXL3"/>
<dbReference type="Proteomes" id="UP000000822">
    <property type="component" value="Chromosome"/>
</dbReference>
<dbReference type="GO" id="GO:0005737">
    <property type="term" value="C:cytoplasm"/>
    <property type="evidence" value="ECO:0007669"/>
    <property type="project" value="UniProtKB-SubCell"/>
</dbReference>
<dbReference type="GO" id="GO:0005524">
    <property type="term" value="F:ATP binding"/>
    <property type="evidence" value="ECO:0007669"/>
    <property type="project" value="UniProtKB-UniRule"/>
</dbReference>
<dbReference type="GO" id="GO:0140662">
    <property type="term" value="F:ATP-dependent protein folding chaperone"/>
    <property type="evidence" value="ECO:0007669"/>
    <property type="project" value="InterPro"/>
</dbReference>
<dbReference type="GO" id="GO:0016853">
    <property type="term" value="F:isomerase activity"/>
    <property type="evidence" value="ECO:0007669"/>
    <property type="project" value="UniProtKB-KW"/>
</dbReference>
<dbReference type="GO" id="GO:0051082">
    <property type="term" value="F:unfolded protein binding"/>
    <property type="evidence" value="ECO:0007669"/>
    <property type="project" value="UniProtKB-UniRule"/>
</dbReference>
<dbReference type="GO" id="GO:0042026">
    <property type="term" value="P:protein refolding"/>
    <property type="evidence" value="ECO:0007669"/>
    <property type="project" value="UniProtKB-UniRule"/>
</dbReference>
<dbReference type="CDD" id="cd03344">
    <property type="entry name" value="GroEL"/>
    <property type="match status" value="1"/>
</dbReference>
<dbReference type="FunFam" id="1.10.560.10:FF:000001">
    <property type="entry name" value="60 kDa chaperonin"/>
    <property type="match status" value="1"/>
</dbReference>
<dbReference type="FunFam" id="3.50.7.10:FF:000001">
    <property type="entry name" value="60 kDa chaperonin"/>
    <property type="match status" value="1"/>
</dbReference>
<dbReference type="Gene3D" id="3.50.7.10">
    <property type="entry name" value="GroEL"/>
    <property type="match status" value="1"/>
</dbReference>
<dbReference type="Gene3D" id="1.10.560.10">
    <property type="entry name" value="GroEL-like equatorial domain"/>
    <property type="match status" value="1"/>
</dbReference>
<dbReference type="Gene3D" id="3.30.260.10">
    <property type="entry name" value="TCP-1-like chaperonin intermediate domain"/>
    <property type="match status" value="1"/>
</dbReference>
<dbReference type="HAMAP" id="MF_00600">
    <property type="entry name" value="CH60"/>
    <property type="match status" value="1"/>
</dbReference>
<dbReference type="InterPro" id="IPR001844">
    <property type="entry name" value="Cpn60/GroEL"/>
</dbReference>
<dbReference type="InterPro" id="IPR002423">
    <property type="entry name" value="Cpn60/GroEL/TCP-1"/>
</dbReference>
<dbReference type="InterPro" id="IPR027409">
    <property type="entry name" value="GroEL-like_apical_dom_sf"/>
</dbReference>
<dbReference type="InterPro" id="IPR027413">
    <property type="entry name" value="GROEL-like_equatorial_sf"/>
</dbReference>
<dbReference type="InterPro" id="IPR027410">
    <property type="entry name" value="TCP-1-like_intermed_sf"/>
</dbReference>
<dbReference type="NCBIfam" id="TIGR02348">
    <property type="entry name" value="GroEL"/>
    <property type="match status" value="1"/>
</dbReference>
<dbReference type="NCBIfam" id="NF000592">
    <property type="entry name" value="PRK00013.1"/>
    <property type="match status" value="1"/>
</dbReference>
<dbReference type="NCBIfam" id="NF009487">
    <property type="entry name" value="PRK12849.1"/>
    <property type="match status" value="1"/>
</dbReference>
<dbReference type="NCBIfam" id="NF009488">
    <property type="entry name" value="PRK12850.1"/>
    <property type="match status" value="1"/>
</dbReference>
<dbReference type="NCBIfam" id="NF009489">
    <property type="entry name" value="PRK12851.1"/>
    <property type="match status" value="1"/>
</dbReference>
<dbReference type="PANTHER" id="PTHR45633">
    <property type="entry name" value="60 KDA HEAT SHOCK PROTEIN, MITOCHONDRIAL"/>
    <property type="match status" value="1"/>
</dbReference>
<dbReference type="Pfam" id="PF00118">
    <property type="entry name" value="Cpn60_TCP1"/>
    <property type="match status" value="1"/>
</dbReference>
<dbReference type="PRINTS" id="PR00298">
    <property type="entry name" value="CHAPERONIN60"/>
</dbReference>
<dbReference type="SUPFAM" id="SSF52029">
    <property type="entry name" value="GroEL apical domain-like"/>
    <property type="match status" value="1"/>
</dbReference>
<dbReference type="SUPFAM" id="SSF48592">
    <property type="entry name" value="GroEL equatorial domain-like"/>
    <property type="match status" value="1"/>
</dbReference>
<dbReference type="SUPFAM" id="SSF54849">
    <property type="entry name" value="GroEL-intermediate domain like"/>
    <property type="match status" value="1"/>
</dbReference>
<sequence>MAKDLKFSEDARRAMLRGVDTLADAVKVTLGPKGRNVVLDKKFGSPLITNDGVTIAKEIELEDAFENMGAQLVSEVASKTNDVAGDGTTTATVLAQAMIREGLKNVTSGANPVGIRRGIEKAVELAVQELKGISQPIESKEAISQIAAVSSGDEEVGQLIAEAMERVGNDGVITIEESKGFNTELEVVEGMQFDRGYASPYMVTDQDKMEAVLEDPYILITDKKIGNIQEVLPVLEQVVQQGKPLLMIAEDVEGEALATLVVNKLRGTFNAVAVKAPGFGDRRKAMLEDIAVLTGAEVITEDLGLDLKSASIDQLGRASKVVVTKENTTVVEGSGDPEAISSRVAQIRAQAEESTSDFDKEKLQERLAKLAGGVAVIKVGAATETELKERKLRIEDALNSTRAGVEEGMVPGGGTALVNIHRQVSELTLEGDEATGASIVLRALEEPVRQIVHNAGLEGSIIVERLKGEKVGIGYNAATDEWVNMVEAGIVDPTKVTRSALQNAASVAAMFLTTEAVVADKPEENGGAGGGMPDMGGMGGMGGMM</sequence>
<accession>Q8CXL3</accession>
<name>CH60_OCEIH</name>
<organism>
    <name type="scientific">Oceanobacillus iheyensis (strain DSM 14371 / CIP 107618 / JCM 11309 / KCTC 3954 / HTE831)</name>
    <dbReference type="NCBI Taxonomy" id="221109"/>
    <lineage>
        <taxon>Bacteria</taxon>
        <taxon>Bacillati</taxon>
        <taxon>Bacillota</taxon>
        <taxon>Bacilli</taxon>
        <taxon>Bacillales</taxon>
        <taxon>Bacillaceae</taxon>
        <taxon>Oceanobacillus</taxon>
    </lineage>
</organism>
<reference key="1">
    <citation type="journal article" date="2002" name="Nucleic Acids Res.">
        <title>Genome sequence of Oceanobacillus iheyensis isolated from the Iheya Ridge and its unexpected adaptive capabilities to extreme environments.</title>
        <authorList>
            <person name="Takami H."/>
            <person name="Takaki Y."/>
            <person name="Uchiyama I."/>
        </authorList>
    </citation>
    <scope>NUCLEOTIDE SEQUENCE [LARGE SCALE GENOMIC DNA]</scope>
    <source>
        <strain>DSM 14371 / CIP 107618 / JCM 11309 / KCTC 3954 / HTE831</strain>
    </source>
</reference>
<feature type="chain" id="PRO_0000063465" description="Chaperonin GroEL">
    <location>
        <begin position="1"/>
        <end position="545"/>
    </location>
</feature>
<feature type="binding site" evidence="1">
    <location>
        <begin position="29"/>
        <end position="32"/>
    </location>
    <ligand>
        <name>ATP</name>
        <dbReference type="ChEBI" id="CHEBI:30616"/>
    </ligand>
</feature>
<feature type="binding site" evidence="1">
    <location>
        <begin position="86"/>
        <end position="90"/>
    </location>
    <ligand>
        <name>ATP</name>
        <dbReference type="ChEBI" id="CHEBI:30616"/>
    </ligand>
</feature>
<feature type="binding site" evidence="1">
    <location>
        <position position="413"/>
    </location>
    <ligand>
        <name>ATP</name>
        <dbReference type="ChEBI" id="CHEBI:30616"/>
    </ligand>
</feature>
<feature type="binding site" evidence="1">
    <location>
        <begin position="476"/>
        <end position="478"/>
    </location>
    <ligand>
        <name>ATP</name>
        <dbReference type="ChEBI" id="CHEBI:30616"/>
    </ligand>
</feature>
<feature type="binding site" evidence="1">
    <location>
        <position position="492"/>
    </location>
    <ligand>
        <name>ATP</name>
        <dbReference type="ChEBI" id="CHEBI:30616"/>
    </ligand>
</feature>
<proteinExistence type="inferred from homology"/>
<comment type="function">
    <text evidence="1">Together with its co-chaperonin GroES, plays an essential role in assisting protein folding. The GroEL-GroES system forms a nano-cage that allows encapsulation of the non-native substrate proteins and provides a physical environment optimized to promote and accelerate protein folding.</text>
</comment>
<comment type="catalytic activity">
    <reaction evidence="1">
        <text>ATP + H2O + a folded polypeptide = ADP + phosphate + an unfolded polypeptide.</text>
        <dbReference type="EC" id="5.6.1.7"/>
    </reaction>
</comment>
<comment type="subunit">
    <text evidence="1">Forms a cylinder of 14 subunits composed of two heptameric rings stacked back-to-back. Interacts with the co-chaperonin GroES.</text>
</comment>
<comment type="subcellular location">
    <subcellularLocation>
        <location evidence="1">Cytoplasm</location>
    </subcellularLocation>
</comment>
<comment type="similarity">
    <text evidence="1">Belongs to the chaperonin (HSP60) family.</text>
</comment>
<protein>
    <recommendedName>
        <fullName evidence="1">Chaperonin GroEL</fullName>
        <ecNumber evidence="1">5.6.1.7</ecNumber>
    </recommendedName>
    <alternativeName>
        <fullName evidence="1">60 kDa chaperonin</fullName>
    </alternativeName>
    <alternativeName>
        <fullName evidence="1">Chaperonin-60</fullName>
        <shortName evidence="1">Cpn60</shortName>
    </alternativeName>
</protein>
<evidence type="ECO:0000255" key="1">
    <source>
        <dbReference type="HAMAP-Rule" id="MF_00600"/>
    </source>
</evidence>
<keyword id="KW-0067">ATP-binding</keyword>
<keyword id="KW-0143">Chaperone</keyword>
<keyword id="KW-0963">Cytoplasm</keyword>
<keyword id="KW-0413">Isomerase</keyword>
<keyword id="KW-0547">Nucleotide-binding</keyword>
<keyword id="KW-1185">Reference proteome</keyword>
<gene>
    <name evidence="1" type="primary">groEL</name>
    <name evidence="1" type="synonym">groL</name>
    <name type="ordered locus">OB0656</name>
</gene>